<sequence length="462" mass="50389">MSYYPPPSGYPGGPPAYPPPQQQQQQQQQYPSYGAPPPQYPPQNNYAPPSYPPPGQYGHPPQPGYPPHSSPYGHTPSPQPPYGHPPPQHPPHQPPHRPPPSPGYGHLPPSTPNSGPAFHGQPGIATVNNNDYVHGNHSAPPPPPSGSVAFGHGAPQGYSYQYSNCTGKRKALLIGINYFGQRGQLRGCINDVKNMSTYLNQSFNYAREDMVILTDDQQNPMSQPTKANILRAMHWLVKDARPNDSLFFHYSGHGGQTPDLDGDEDDGYDEVIYPVDFRNAGHIVDDEMHRIMVRPLPAGVRLTAIFDSCHSGSALDLPYIYSTQGVLKEPNLAKEAGQGLLGVVSAYARGDMGSMVSTAMGFIKKATRGEETYQRAKQTKTSPADVIMWSGSKDVQTSADATINGQATGALSWAFITALKKNPQQSYVQLLNSIRDELASKYSQKPQLSCSHPLDTNLLYVM</sequence>
<accession>Q1E0A3</accession>
<accession>J3KD04</accession>
<dbReference type="EC" id="3.4.22.-"/>
<dbReference type="EMBL" id="GG704916">
    <property type="protein sequence ID" value="EAS32986.3"/>
    <property type="molecule type" value="Genomic_DNA"/>
</dbReference>
<dbReference type="RefSeq" id="XP_001244569.1">
    <property type="nucleotide sequence ID" value="XM_001244568.2"/>
</dbReference>
<dbReference type="SMR" id="Q1E0A3"/>
<dbReference type="FunCoup" id="Q1E0A3">
    <property type="interactions" value="349"/>
</dbReference>
<dbReference type="STRING" id="246410.Q1E0A3"/>
<dbReference type="GeneID" id="4565012"/>
<dbReference type="KEGG" id="cim:CIMG_04010"/>
<dbReference type="VEuPathDB" id="FungiDB:CIMG_04010"/>
<dbReference type="InParanoid" id="Q1E0A3"/>
<dbReference type="OMA" id="MHRIMVT"/>
<dbReference type="OrthoDB" id="3223806at2759"/>
<dbReference type="Proteomes" id="UP000001261">
    <property type="component" value="Unassembled WGS sequence"/>
</dbReference>
<dbReference type="GO" id="GO:0005737">
    <property type="term" value="C:cytoplasm"/>
    <property type="evidence" value="ECO:0007669"/>
    <property type="project" value="TreeGrafter"/>
</dbReference>
<dbReference type="GO" id="GO:0004197">
    <property type="term" value="F:cysteine-type endopeptidase activity"/>
    <property type="evidence" value="ECO:0007669"/>
    <property type="project" value="InterPro"/>
</dbReference>
<dbReference type="GO" id="GO:0006915">
    <property type="term" value="P:apoptotic process"/>
    <property type="evidence" value="ECO:0007669"/>
    <property type="project" value="UniProtKB-KW"/>
</dbReference>
<dbReference type="GO" id="GO:0006508">
    <property type="term" value="P:proteolysis"/>
    <property type="evidence" value="ECO:0007669"/>
    <property type="project" value="UniProtKB-KW"/>
</dbReference>
<dbReference type="Gene3D" id="3.40.50.12660">
    <property type="match status" value="1"/>
</dbReference>
<dbReference type="InterPro" id="IPR029030">
    <property type="entry name" value="Caspase-like_dom_sf"/>
</dbReference>
<dbReference type="InterPro" id="IPR050452">
    <property type="entry name" value="Metacaspase"/>
</dbReference>
<dbReference type="InterPro" id="IPR011600">
    <property type="entry name" value="Pept_C14_caspase"/>
</dbReference>
<dbReference type="PANTHER" id="PTHR48104:SF30">
    <property type="entry name" value="METACASPASE-1"/>
    <property type="match status" value="1"/>
</dbReference>
<dbReference type="PANTHER" id="PTHR48104">
    <property type="entry name" value="METACASPASE-4"/>
    <property type="match status" value="1"/>
</dbReference>
<dbReference type="Pfam" id="PF00656">
    <property type="entry name" value="Peptidase_C14"/>
    <property type="match status" value="1"/>
</dbReference>
<dbReference type="SUPFAM" id="SSF52129">
    <property type="entry name" value="Caspase-like"/>
    <property type="match status" value="1"/>
</dbReference>
<name>MCA1_COCIM</name>
<gene>
    <name type="primary">MCA1</name>
    <name type="ORF">CIMG_04010</name>
</gene>
<keyword id="KW-0053">Apoptosis</keyword>
<keyword id="KW-0378">Hydrolase</keyword>
<keyword id="KW-0645">Protease</keyword>
<keyword id="KW-1185">Reference proteome</keyword>
<keyword id="KW-0788">Thiol protease</keyword>
<keyword id="KW-0865">Zymogen</keyword>
<proteinExistence type="inferred from homology"/>
<comment type="function">
    <text evidence="1">Involved in cell death (apoptosis).</text>
</comment>
<comment type="similarity">
    <text evidence="4">Belongs to the peptidase C14B family.</text>
</comment>
<organism>
    <name type="scientific">Coccidioides immitis (strain RS)</name>
    <name type="common">Valley fever fungus</name>
    <dbReference type="NCBI Taxonomy" id="246410"/>
    <lineage>
        <taxon>Eukaryota</taxon>
        <taxon>Fungi</taxon>
        <taxon>Dikarya</taxon>
        <taxon>Ascomycota</taxon>
        <taxon>Pezizomycotina</taxon>
        <taxon>Eurotiomycetes</taxon>
        <taxon>Eurotiomycetidae</taxon>
        <taxon>Onygenales</taxon>
        <taxon>Onygenaceae</taxon>
        <taxon>Coccidioides</taxon>
    </lineage>
</organism>
<feature type="propeptide" id="PRO_0000333642" evidence="2">
    <location>
        <begin position="1"/>
        <end status="unknown"/>
    </location>
</feature>
<feature type="chain" id="PRO_0000333643" description="Metacaspase-1">
    <location>
        <begin status="unknown"/>
        <end position="462"/>
    </location>
</feature>
<feature type="region of interest" description="Disordered" evidence="3">
    <location>
        <begin position="1"/>
        <end position="150"/>
    </location>
</feature>
<feature type="compositionally biased region" description="Pro residues" evidence="3">
    <location>
        <begin position="1"/>
        <end position="21"/>
    </location>
</feature>
<feature type="compositionally biased region" description="Low complexity" evidence="3">
    <location>
        <begin position="22"/>
        <end position="33"/>
    </location>
</feature>
<feature type="compositionally biased region" description="Pro residues" evidence="3">
    <location>
        <begin position="49"/>
        <end position="69"/>
    </location>
</feature>
<feature type="compositionally biased region" description="Pro residues" evidence="3">
    <location>
        <begin position="77"/>
        <end position="102"/>
    </location>
</feature>
<feature type="active site" evidence="1">
    <location>
        <position position="253"/>
    </location>
</feature>
<feature type="active site" evidence="1">
    <location>
        <position position="309"/>
    </location>
</feature>
<reference key="1">
    <citation type="journal article" date="2009" name="Genome Res.">
        <title>Comparative genomic analyses of the human fungal pathogens Coccidioides and their relatives.</title>
        <authorList>
            <person name="Sharpton T.J."/>
            <person name="Stajich J.E."/>
            <person name="Rounsley S.D."/>
            <person name="Gardner M.J."/>
            <person name="Wortman J.R."/>
            <person name="Jordar V.S."/>
            <person name="Maiti R."/>
            <person name="Kodira C.D."/>
            <person name="Neafsey D.E."/>
            <person name="Zeng Q."/>
            <person name="Hung C.-Y."/>
            <person name="McMahan C."/>
            <person name="Muszewska A."/>
            <person name="Grynberg M."/>
            <person name="Mandel M.A."/>
            <person name="Kellner E.M."/>
            <person name="Barker B.M."/>
            <person name="Galgiani J.N."/>
            <person name="Orbach M.J."/>
            <person name="Kirkland T.N."/>
            <person name="Cole G.T."/>
            <person name="Henn M.R."/>
            <person name="Birren B.W."/>
            <person name="Taylor J.W."/>
        </authorList>
    </citation>
    <scope>NUCLEOTIDE SEQUENCE [LARGE SCALE GENOMIC DNA]</scope>
    <source>
        <strain>RS</strain>
    </source>
</reference>
<reference key="2">
    <citation type="journal article" date="2010" name="Genome Res.">
        <title>Population genomic sequencing of Coccidioides fungi reveals recent hybridization and transposon control.</title>
        <authorList>
            <person name="Neafsey D.E."/>
            <person name="Barker B.M."/>
            <person name="Sharpton T.J."/>
            <person name="Stajich J.E."/>
            <person name="Park D.J."/>
            <person name="Whiston E."/>
            <person name="Hung C.-Y."/>
            <person name="McMahan C."/>
            <person name="White J."/>
            <person name="Sykes S."/>
            <person name="Heiman D."/>
            <person name="Young S."/>
            <person name="Zeng Q."/>
            <person name="Abouelleil A."/>
            <person name="Aftuck L."/>
            <person name="Bessette D."/>
            <person name="Brown A."/>
            <person name="FitzGerald M."/>
            <person name="Lui A."/>
            <person name="Macdonald J.P."/>
            <person name="Priest M."/>
            <person name="Orbach M.J."/>
            <person name="Galgiani J.N."/>
            <person name="Kirkland T.N."/>
            <person name="Cole G.T."/>
            <person name="Birren B.W."/>
            <person name="Henn M.R."/>
            <person name="Taylor J.W."/>
            <person name="Rounsley S.D."/>
        </authorList>
    </citation>
    <scope>GENOME REANNOTATION</scope>
    <source>
        <strain>RS</strain>
    </source>
</reference>
<protein>
    <recommendedName>
        <fullName>Metacaspase-1</fullName>
        <ecNumber>3.4.22.-</ecNumber>
    </recommendedName>
</protein>
<evidence type="ECO:0000250" key="1"/>
<evidence type="ECO:0000255" key="2"/>
<evidence type="ECO:0000256" key="3">
    <source>
        <dbReference type="SAM" id="MobiDB-lite"/>
    </source>
</evidence>
<evidence type="ECO:0000305" key="4"/>